<sequence length="298" mass="35099">MNHIQEAFLNTLKVERNFSEHTLKSYQDDLIQFNQFLEQEHLQLNTFEYRDARNYLSYLYSNHLKRTSVSRKISTLRTFYEYWMTLDENIINPFVQLVHPKKEKYLPQFFYEEEMEALFKTVEEDTSKSLRDRVILELLYATGIRVSELVNIKKQDIDFYANGVTVLGKGSKERFVPFGAYCRQSIENYLEHFKPIQSCNHDFLIVNMKGEAITERGVRYVLNDIVKRTAGVSEIHPHKLRHTFATHLLNQGADLRTVQSLLGHVNLSTTGKYTHVSNQQLRKVYLNAHPRAKKENET</sequence>
<accession>Q6GHI3</accession>
<evidence type="ECO:0000255" key="1">
    <source>
        <dbReference type="HAMAP-Rule" id="MF_01808"/>
    </source>
</evidence>
<evidence type="ECO:0000255" key="2">
    <source>
        <dbReference type="PROSITE-ProRule" id="PRU01246"/>
    </source>
</evidence>
<evidence type="ECO:0000255" key="3">
    <source>
        <dbReference type="PROSITE-ProRule" id="PRU01248"/>
    </source>
</evidence>
<comment type="function">
    <text evidence="1">Site-specific tyrosine recombinase, which acts by catalyzing the cutting and rejoining of the recombining DNA molecules. The XerC-XerD complex is essential to convert dimers of the bacterial chromosome into monomers to permit their segregation at cell division. It also contributes to the segregational stability of plasmids.</text>
</comment>
<comment type="subunit">
    <text evidence="1">Forms a cyclic heterotetrameric complex composed of two molecules of XerC and two molecules of XerD.</text>
</comment>
<comment type="subcellular location">
    <subcellularLocation>
        <location evidence="1">Cytoplasm</location>
    </subcellularLocation>
</comment>
<comment type="similarity">
    <text evidence="1">Belongs to the 'phage' integrase family. XerC subfamily.</text>
</comment>
<feature type="chain" id="PRO_0000095332" description="Tyrosine recombinase XerC">
    <location>
        <begin position="1"/>
        <end position="298"/>
    </location>
</feature>
<feature type="domain" description="Core-binding (CB)" evidence="3">
    <location>
        <begin position="1"/>
        <end position="84"/>
    </location>
</feature>
<feature type="domain" description="Tyr recombinase" evidence="2">
    <location>
        <begin position="105"/>
        <end position="286"/>
    </location>
</feature>
<feature type="active site" evidence="1">
    <location>
        <position position="145"/>
    </location>
</feature>
<feature type="active site" evidence="1">
    <location>
        <position position="169"/>
    </location>
</feature>
<feature type="active site" evidence="1">
    <location>
        <position position="238"/>
    </location>
</feature>
<feature type="active site" evidence="1">
    <location>
        <position position="241"/>
    </location>
</feature>
<feature type="active site" evidence="1">
    <location>
        <position position="264"/>
    </location>
</feature>
<feature type="active site" description="O-(3'-phospho-DNA)-tyrosine intermediate" evidence="1">
    <location>
        <position position="273"/>
    </location>
</feature>
<gene>
    <name evidence="1" type="primary">xerC</name>
    <name type="ordered locus">SAR1228</name>
</gene>
<reference key="1">
    <citation type="journal article" date="2004" name="Proc. Natl. Acad. Sci. U.S.A.">
        <title>Complete genomes of two clinical Staphylococcus aureus strains: evidence for the rapid evolution of virulence and drug resistance.</title>
        <authorList>
            <person name="Holden M.T.G."/>
            <person name="Feil E.J."/>
            <person name="Lindsay J.A."/>
            <person name="Peacock S.J."/>
            <person name="Day N.P.J."/>
            <person name="Enright M.C."/>
            <person name="Foster T.J."/>
            <person name="Moore C.E."/>
            <person name="Hurst L."/>
            <person name="Atkin R."/>
            <person name="Barron A."/>
            <person name="Bason N."/>
            <person name="Bentley S.D."/>
            <person name="Chillingworth C."/>
            <person name="Chillingworth T."/>
            <person name="Churcher C."/>
            <person name="Clark L."/>
            <person name="Corton C."/>
            <person name="Cronin A."/>
            <person name="Doggett J."/>
            <person name="Dowd L."/>
            <person name="Feltwell T."/>
            <person name="Hance Z."/>
            <person name="Harris B."/>
            <person name="Hauser H."/>
            <person name="Holroyd S."/>
            <person name="Jagels K."/>
            <person name="James K.D."/>
            <person name="Lennard N."/>
            <person name="Line A."/>
            <person name="Mayes R."/>
            <person name="Moule S."/>
            <person name="Mungall K."/>
            <person name="Ormond D."/>
            <person name="Quail M.A."/>
            <person name="Rabbinowitsch E."/>
            <person name="Rutherford K.M."/>
            <person name="Sanders M."/>
            <person name="Sharp S."/>
            <person name="Simmonds M."/>
            <person name="Stevens K."/>
            <person name="Whitehead S."/>
            <person name="Barrell B.G."/>
            <person name="Spratt B.G."/>
            <person name="Parkhill J."/>
        </authorList>
    </citation>
    <scope>NUCLEOTIDE SEQUENCE [LARGE SCALE GENOMIC DNA]</scope>
    <source>
        <strain>MRSA252</strain>
    </source>
</reference>
<protein>
    <recommendedName>
        <fullName evidence="1">Tyrosine recombinase XerC</fullName>
    </recommendedName>
</protein>
<dbReference type="EMBL" id="BX571856">
    <property type="protein sequence ID" value="CAG40230.1"/>
    <property type="molecule type" value="Genomic_DNA"/>
</dbReference>
<dbReference type="RefSeq" id="WP_001015609.1">
    <property type="nucleotide sequence ID" value="NC_002952.2"/>
</dbReference>
<dbReference type="SMR" id="Q6GHI3"/>
<dbReference type="KEGG" id="sar:SAR1228"/>
<dbReference type="HOGENOM" id="CLU_027562_9_0_9"/>
<dbReference type="Proteomes" id="UP000000596">
    <property type="component" value="Chromosome"/>
</dbReference>
<dbReference type="GO" id="GO:0005737">
    <property type="term" value="C:cytoplasm"/>
    <property type="evidence" value="ECO:0007669"/>
    <property type="project" value="UniProtKB-SubCell"/>
</dbReference>
<dbReference type="GO" id="GO:0003677">
    <property type="term" value="F:DNA binding"/>
    <property type="evidence" value="ECO:0007669"/>
    <property type="project" value="UniProtKB-KW"/>
</dbReference>
<dbReference type="GO" id="GO:0009037">
    <property type="term" value="F:tyrosine-based site-specific recombinase activity"/>
    <property type="evidence" value="ECO:0007669"/>
    <property type="project" value="UniProtKB-UniRule"/>
</dbReference>
<dbReference type="GO" id="GO:0051301">
    <property type="term" value="P:cell division"/>
    <property type="evidence" value="ECO:0007669"/>
    <property type="project" value="UniProtKB-KW"/>
</dbReference>
<dbReference type="GO" id="GO:0007059">
    <property type="term" value="P:chromosome segregation"/>
    <property type="evidence" value="ECO:0007669"/>
    <property type="project" value="UniProtKB-UniRule"/>
</dbReference>
<dbReference type="GO" id="GO:0006313">
    <property type="term" value="P:DNA transposition"/>
    <property type="evidence" value="ECO:0007669"/>
    <property type="project" value="UniProtKB-UniRule"/>
</dbReference>
<dbReference type="CDD" id="cd00798">
    <property type="entry name" value="INT_XerDC_C"/>
    <property type="match status" value="1"/>
</dbReference>
<dbReference type="Gene3D" id="1.10.150.130">
    <property type="match status" value="1"/>
</dbReference>
<dbReference type="Gene3D" id="1.10.443.10">
    <property type="entry name" value="Intergrase catalytic core"/>
    <property type="match status" value="1"/>
</dbReference>
<dbReference type="HAMAP" id="MF_01808">
    <property type="entry name" value="Recomb_XerC_XerD"/>
    <property type="match status" value="1"/>
</dbReference>
<dbReference type="InterPro" id="IPR044068">
    <property type="entry name" value="CB"/>
</dbReference>
<dbReference type="InterPro" id="IPR011010">
    <property type="entry name" value="DNA_brk_join_enz"/>
</dbReference>
<dbReference type="InterPro" id="IPR013762">
    <property type="entry name" value="Integrase-like_cat_sf"/>
</dbReference>
<dbReference type="InterPro" id="IPR002104">
    <property type="entry name" value="Integrase_catalytic"/>
</dbReference>
<dbReference type="InterPro" id="IPR010998">
    <property type="entry name" value="Integrase_recombinase_N"/>
</dbReference>
<dbReference type="InterPro" id="IPR004107">
    <property type="entry name" value="Integrase_SAM-like_N"/>
</dbReference>
<dbReference type="InterPro" id="IPR011931">
    <property type="entry name" value="Recomb_XerC"/>
</dbReference>
<dbReference type="InterPro" id="IPR023009">
    <property type="entry name" value="Tyrosine_recombinase_XerC/XerD"/>
</dbReference>
<dbReference type="InterPro" id="IPR050090">
    <property type="entry name" value="Tyrosine_recombinase_XerCD"/>
</dbReference>
<dbReference type="NCBIfam" id="NF001399">
    <property type="entry name" value="PRK00283.1"/>
    <property type="match status" value="1"/>
</dbReference>
<dbReference type="NCBIfam" id="NF040815">
    <property type="entry name" value="recomb_XerA_Arch"/>
    <property type="match status" value="1"/>
</dbReference>
<dbReference type="NCBIfam" id="TIGR02224">
    <property type="entry name" value="recomb_XerC"/>
    <property type="match status" value="1"/>
</dbReference>
<dbReference type="PANTHER" id="PTHR30349">
    <property type="entry name" value="PHAGE INTEGRASE-RELATED"/>
    <property type="match status" value="1"/>
</dbReference>
<dbReference type="PANTHER" id="PTHR30349:SF77">
    <property type="entry name" value="TYROSINE RECOMBINASE XERC"/>
    <property type="match status" value="1"/>
</dbReference>
<dbReference type="Pfam" id="PF02899">
    <property type="entry name" value="Phage_int_SAM_1"/>
    <property type="match status" value="1"/>
</dbReference>
<dbReference type="Pfam" id="PF00589">
    <property type="entry name" value="Phage_integrase"/>
    <property type="match status" value="1"/>
</dbReference>
<dbReference type="SUPFAM" id="SSF56349">
    <property type="entry name" value="DNA breaking-rejoining enzymes"/>
    <property type="match status" value="1"/>
</dbReference>
<dbReference type="PROSITE" id="PS51900">
    <property type="entry name" value="CB"/>
    <property type="match status" value="1"/>
</dbReference>
<dbReference type="PROSITE" id="PS51898">
    <property type="entry name" value="TYR_RECOMBINASE"/>
    <property type="match status" value="1"/>
</dbReference>
<keyword id="KW-0131">Cell cycle</keyword>
<keyword id="KW-0132">Cell division</keyword>
<keyword id="KW-0159">Chromosome partition</keyword>
<keyword id="KW-0963">Cytoplasm</keyword>
<keyword id="KW-0229">DNA integration</keyword>
<keyword id="KW-0233">DNA recombination</keyword>
<keyword id="KW-0238">DNA-binding</keyword>
<name>XERC_STAAR</name>
<organism>
    <name type="scientific">Staphylococcus aureus (strain MRSA252)</name>
    <dbReference type="NCBI Taxonomy" id="282458"/>
    <lineage>
        <taxon>Bacteria</taxon>
        <taxon>Bacillati</taxon>
        <taxon>Bacillota</taxon>
        <taxon>Bacilli</taxon>
        <taxon>Bacillales</taxon>
        <taxon>Staphylococcaceae</taxon>
        <taxon>Staphylococcus</taxon>
    </lineage>
</organism>
<proteinExistence type="inferred from homology"/>